<proteinExistence type="inferred from homology"/>
<keyword id="KW-0333">Golgi apparatus</keyword>
<keyword id="KW-0472">Membrane</keyword>
<keyword id="KW-0653">Protein transport</keyword>
<keyword id="KW-1185">Reference proteome</keyword>
<keyword id="KW-0813">Transport</keyword>
<gene>
    <name type="primary">COG6</name>
    <name type="ORF">SS1G_07956</name>
</gene>
<name>COG6_SCLS1</name>
<comment type="function">
    <text evidence="1">Acts as a component of the peripheral membrane COG complex that is involved in intra-Golgi protein trafficking. COG is located at the cis-Golgi, and regulates tethering of retrograde intra-Golgi vesicles and possibly a number of other membrane trafficking events (By similarity).</text>
</comment>
<comment type="subcellular location">
    <subcellularLocation>
        <location evidence="1">Golgi apparatus membrane</location>
        <topology evidence="1">Peripheral membrane protein</topology>
    </subcellularLocation>
</comment>
<comment type="similarity">
    <text evidence="3">Belongs to the COG6 family.</text>
</comment>
<sequence>MTTDYFTRKQSYSGFSDGADSPGSPLASRTNPLSSKVTSVLSASYADSDIRDALSLLDKRGIQNTAETRRQLRLDVHREVIESNGDIIREFGHVAEEASELMKQQEQMQAKQELLNAFNAHFVMSDDDIAMLTSTAEPVNDRFFSILSRAKKIQNDCEILLGTENQRLGLEIMEQTSKNINGAFQKLYRWIQREFKTLNLENPQISSSIRRALRVLAERPSLFQSCLDFFAEARENILSDGFYTALTGTTVGGDEDPSIKPIELVAHDPLRYVGDMLAWTHSATVGEREALEVLFISDGDEIAKGIQAGLDSEPWNRIAESEDEVGHFDGLKALNELVDRDVAGVARVLRQKIGQVIQSHEETIMAYKIANLLNFYRGTFQRLLGDDSVLLDSLATLEESALRQFRALMRDHITSLQAETQVAPPNLSPPDFLHEGLKQLTAIMKTYETSFTSPETREAGFEPILTEAFDPFMKGSENVAKDLSAPRSTIFTINCLLSARATLAPFDFTISRVSQIKDTIEEHAATLIDHQYIFFLEKSALQPLLQALSATTDIRDHPVFQPASLIQASQTLDDFLPSALMDAMENLKDLQNSMLVRQITEEAAEKFCDDFEKVEERLMKADEEREESLDEKDGEPHHVRALYPRTGGEIRVLLSIRIWNMFKTWRLEIT</sequence>
<organism>
    <name type="scientific">Sclerotinia sclerotiorum (strain ATCC 18683 / 1980 / Ss-1)</name>
    <name type="common">White mold</name>
    <name type="synonym">Whetzelinia sclerotiorum</name>
    <dbReference type="NCBI Taxonomy" id="665079"/>
    <lineage>
        <taxon>Eukaryota</taxon>
        <taxon>Fungi</taxon>
        <taxon>Dikarya</taxon>
        <taxon>Ascomycota</taxon>
        <taxon>Pezizomycotina</taxon>
        <taxon>Leotiomycetes</taxon>
        <taxon>Helotiales</taxon>
        <taxon>Sclerotiniaceae</taxon>
        <taxon>Sclerotinia</taxon>
    </lineage>
</organism>
<dbReference type="EMBL" id="CH476630">
    <property type="protein sequence ID" value="EDN92094.1"/>
    <property type="molecule type" value="Genomic_DNA"/>
</dbReference>
<dbReference type="RefSeq" id="XP_001591330.1">
    <property type="nucleotide sequence ID" value="XM_001591280.1"/>
</dbReference>
<dbReference type="SMR" id="A7ERK2"/>
<dbReference type="FunCoup" id="A7ERK2">
    <property type="interactions" value="239"/>
</dbReference>
<dbReference type="STRING" id="665079.A7ERK2"/>
<dbReference type="GeneID" id="5487318"/>
<dbReference type="KEGG" id="ssl:SS1G_07956"/>
<dbReference type="InParanoid" id="A7ERK2"/>
<dbReference type="OMA" id="HSCLDFF"/>
<dbReference type="Proteomes" id="UP000001312">
    <property type="component" value="Unassembled WGS sequence"/>
</dbReference>
<dbReference type="GO" id="GO:0000139">
    <property type="term" value="C:Golgi membrane"/>
    <property type="evidence" value="ECO:0007669"/>
    <property type="project" value="UniProtKB-SubCell"/>
</dbReference>
<dbReference type="GO" id="GO:0017119">
    <property type="term" value="C:Golgi transport complex"/>
    <property type="evidence" value="ECO:0000318"/>
    <property type="project" value="GO_Central"/>
</dbReference>
<dbReference type="GO" id="GO:0006891">
    <property type="term" value="P:intra-Golgi vesicle-mediated transport"/>
    <property type="evidence" value="ECO:0000318"/>
    <property type="project" value="GO_Central"/>
</dbReference>
<dbReference type="GO" id="GO:0015031">
    <property type="term" value="P:protein transport"/>
    <property type="evidence" value="ECO:0007669"/>
    <property type="project" value="UniProtKB-KW"/>
</dbReference>
<dbReference type="InterPro" id="IPR010490">
    <property type="entry name" value="COG6"/>
</dbReference>
<dbReference type="InterPro" id="IPR048369">
    <property type="entry name" value="COG6_C"/>
</dbReference>
<dbReference type="InterPro" id="IPR048368">
    <property type="entry name" value="COG6_N"/>
</dbReference>
<dbReference type="PANTHER" id="PTHR21506">
    <property type="entry name" value="COMPONENT OF OLIGOMERIC GOLGI COMPLEX 6"/>
    <property type="match status" value="1"/>
</dbReference>
<dbReference type="PANTHER" id="PTHR21506:SF0">
    <property type="entry name" value="CONSERVED OLIGOMERIC GOLGI COMPLEX SUBUNIT 6"/>
    <property type="match status" value="1"/>
</dbReference>
<dbReference type="Pfam" id="PF20653">
    <property type="entry name" value="COG6_C"/>
    <property type="match status" value="1"/>
</dbReference>
<dbReference type="Pfam" id="PF06419">
    <property type="entry name" value="COG6_N"/>
    <property type="match status" value="1"/>
</dbReference>
<dbReference type="SMART" id="SM01087">
    <property type="entry name" value="COG6"/>
    <property type="match status" value="1"/>
</dbReference>
<protein>
    <recommendedName>
        <fullName>Conserved oligomeric Golgi complex subunit 6</fullName>
        <shortName>COG complex subunit 6</shortName>
    </recommendedName>
    <alternativeName>
        <fullName>Component of oligomeric Golgi complex 6</fullName>
    </alternativeName>
</protein>
<reference key="1">
    <citation type="journal article" date="2011" name="PLoS Genet.">
        <title>Genomic analysis of the necrotrophic fungal pathogens Sclerotinia sclerotiorum and Botrytis cinerea.</title>
        <authorList>
            <person name="Amselem J."/>
            <person name="Cuomo C.A."/>
            <person name="van Kan J.A.L."/>
            <person name="Viaud M."/>
            <person name="Benito E.P."/>
            <person name="Couloux A."/>
            <person name="Coutinho P.M."/>
            <person name="de Vries R.P."/>
            <person name="Dyer P.S."/>
            <person name="Fillinger S."/>
            <person name="Fournier E."/>
            <person name="Gout L."/>
            <person name="Hahn M."/>
            <person name="Kohn L."/>
            <person name="Lapalu N."/>
            <person name="Plummer K.M."/>
            <person name="Pradier J.-M."/>
            <person name="Quevillon E."/>
            <person name="Sharon A."/>
            <person name="Simon A."/>
            <person name="ten Have A."/>
            <person name="Tudzynski B."/>
            <person name="Tudzynski P."/>
            <person name="Wincker P."/>
            <person name="Andrew M."/>
            <person name="Anthouard V."/>
            <person name="Beever R.E."/>
            <person name="Beffa R."/>
            <person name="Benoit I."/>
            <person name="Bouzid O."/>
            <person name="Brault B."/>
            <person name="Chen Z."/>
            <person name="Choquer M."/>
            <person name="Collemare J."/>
            <person name="Cotton P."/>
            <person name="Danchin E.G."/>
            <person name="Da Silva C."/>
            <person name="Gautier A."/>
            <person name="Giraud C."/>
            <person name="Giraud T."/>
            <person name="Gonzalez C."/>
            <person name="Grossetete S."/>
            <person name="Gueldener U."/>
            <person name="Henrissat B."/>
            <person name="Howlett B.J."/>
            <person name="Kodira C."/>
            <person name="Kretschmer M."/>
            <person name="Lappartient A."/>
            <person name="Leroch M."/>
            <person name="Levis C."/>
            <person name="Mauceli E."/>
            <person name="Neuveglise C."/>
            <person name="Oeser B."/>
            <person name="Pearson M."/>
            <person name="Poulain J."/>
            <person name="Poussereau N."/>
            <person name="Quesneville H."/>
            <person name="Rascle C."/>
            <person name="Schumacher J."/>
            <person name="Segurens B."/>
            <person name="Sexton A."/>
            <person name="Silva E."/>
            <person name="Sirven C."/>
            <person name="Soanes D.M."/>
            <person name="Talbot N.J."/>
            <person name="Templeton M."/>
            <person name="Yandava C."/>
            <person name="Yarden O."/>
            <person name="Zeng Q."/>
            <person name="Rollins J.A."/>
            <person name="Lebrun M.-H."/>
            <person name="Dickman M."/>
        </authorList>
    </citation>
    <scope>NUCLEOTIDE SEQUENCE [LARGE SCALE GENOMIC DNA]</scope>
    <source>
        <strain>ATCC 18683 / 1980 / Ss-1</strain>
    </source>
</reference>
<evidence type="ECO:0000250" key="1"/>
<evidence type="ECO:0000256" key="2">
    <source>
        <dbReference type="SAM" id="MobiDB-lite"/>
    </source>
</evidence>
<evidence type="ECO:0000305" key="3"/>
<accession>A7ERK2</accession>
<feature type="chain" id="PRO_0000339331" description="Conserved oligomeric Golgi complex subunit 6">
    <location>
        <begin position="1"/>
        <end position="670"/>
    </location>
</feature>
<feature type="region of interest" description="Disordered" evidence="2">
    <location>
        <begin position="1"/>
        <end position="32"/>
    </location>
</feature>
<feature type="compositionally biased region" description="Polar residues" evidence="2">
    <location>
        <begin position="1"/>
        <end position="14"/>
    </location>
</feature>